<feature type="chain" id="PRO_0000181788" description="tRNA(Ile)-lysidine synthase">
    <location>
        <begin position="1"/>
        <end position="325"/>
    </location>
</feature>
<feature type="binding site" evidence="1">
    <location>
        <begin position="34"/>
        <end position="39"/>
    </location>
    <ligand>
        <name>ATP</name>
        <dbReference type="ChEBI" id="CHEBI:30616"/>
    </ligand>
</feature>
<comment type="function">
    <text evidence="1">Ligates lysine onto the cytidine present at position 34 of the AUA codon-specific tRNA(Ile) that contains the anticodon CAU, in an ATP-dependent manner. Cytidine is converted to lysidine, thus changing the amino acid specificity of the tRNA from methionine to isoleucine.</text>
</comment>
<comment type="catalytic activity">
    <reaction evidence="1">
        <text>cytidine(34) in tRNA(Ile2) + L-lysine + ATP = lysidine(34) in tRNA(Ile2) + AMP + diphosphate + H(+)</text>
        <dbReference type="Rhea" id="RHEA:43744"/>
        <dbReference type="Rhea" id="RHEA-COMP:10625"/>
        <dbReference type="Rhea" id="RHEA-COMP:10670"/>
        <dbReference type="ChEBI" id="CHEBI:15378"/>
        <dbReference type="ChEBI" id="CHEBI:30616"/>
        <dbReference type="ChEBI" id="CHEBI:32551"/>
        <dbReference type="ChEBI" id="CHEBI:33019"/>
        <dbReference type="ChEBI" id="CHEBI:82748"/>
        <dbReference type="ChEBI" id="CHEBI:83665"/>
        <dbReference type="ChEBI" id="CHEBI:456215"/>
        <dbReference type="EC" id="6.3.4.19"/>
    </reaction>
</comment>
<comment type="subcellular location">
    <subcellularLocation>
        <location evidence="1">Cytoplasm</location>
    </subcellularLocation>
</comment>
<comment type="domain">
    <text>The N-terminal region contains the highly conserved SGGXDS motif, predicted to be a P-loop motif involved in ATP binding.</text>
</comment>
<comment type="similarity">
    <text evidence="1">Belongs to the tRNA(Ile)-lysidine synthase family.</text>
</comment>
<comment type="sequence caution" evidence="2">
    <conflict type="erroneous initiation">
        <sequence resource="EMBL-CDS" id="BAD78602"/>
    </conflict>
</comment>
<organism>
    <name type="scientific">Synechococcus sp. (strain ATCC 27144 / PCC 6301 / SAUG 1402/1)</name>
    <name type="common">Anacystis nidulans</name>
    <dbReference type="NCBI Taxonomy" id="269084"/>
    <lineage>
        <taxon>Bacteria</taxon>
        <taxon>Bacillati</taxon>
        <taxon>Cyanobacteriota</taxon>
        <taxon>Cyanophyceae</taxon>
        <taxon>Synechococcales</taxon>
        <taxon>Synechococcaceae</taxon>
        <taxon>Synechococcus</taxon>
    </lineage>
</organism>
<dbReference type="EC" id="6.3.4.19" evidence="1"/>
<dbReference type="EMBL" id="AP008231">
    <property type="protein sequence ID" value="BAD78602.1"/>
    <property type="status" value="ALT_INIT"/>
    <property type="molecule type" value="Genomic_DNA"/>
</dbReference>
<dbReference type="RefSeq" id="WP_041676919.1">
    <property type="nucleotide sequence ID" value="NC_006576.1"/>
</dbReference>
<dbReference type="SMR" id="Q5N517"/>
<dbReference type="KEGG" id="syc:syc0412_c"/>
<dbReference type="eggNOG" id="COG0037">
    <property type="taxonomic scope" value="Bacteria"/>
</dbReference>
<dbReference type="Proteomes" id="UP000001175">
    <property type="component" value="Chromosome"/>
</dbReference>
<dbReference type="GO" id="GO:0005737">
    <property type="term" value="C:cytoplasm"/>
    <property type="evidence" value="ECO:0007669"/>
    <property type="project" value="UniProtKB-SubCell"/>
</dbReference>
<dbReference type="GO" id="GO:0005524">
    <property type="term" value="F:ATP binding"/>
    <property type="evidence" value="ECO:0007669"/>
    <property type="project" value="UniProtKB-UniRule"/>
</dbReference>
<dbReference type="GO" id="GO:0032267">
    <property type="term" value="F:tRNA(Ile)-lysidine synthase activity"/>
    <property type="evidence" value="ECO:0007669"/>
    <property type="project" value="UniProtKB-EC"/>
</dbReference>
<dbReference type="GO" id="GO:0006400">
    <property type="term" value="P:tRNA modification"/>
    <property type="evidence" value="ECO:0007669"/>
    <property type="project" value="UniProtKB-UniRule"/>
</dbReference>
<dbReference type="CDD" id="cd01992">
    <property type="entry name" value="TilS_N"/>
    <property type="match status" value="1"/>
</dbReference>
<dbReference type="Gene3D" id="1.20.59.20">
    <property type="match status" value="1"/>
</dbReference>
<dbReference type="Gene3D" id="3.40.50.620">
    <property type="entry name" value="HUPs"/>
    <property type="match status" value="1"/>
</dbReference>
<dbReference type="HAMAP" id="MF_01161">
    <property type="entry name" value="tRNA_Ile_lys_synt"/>
    <property type="match status" value="1"/>
</dbReference>
<dbReference type="InterPro" id="IPR014729">
    <property type="entry name" value="Rossmann-like_a/b/a_fold"/>
</dbReference>
<dbReference type="InterPro" id="IPR011063">
    <property type="entry name" value="TilS/TtcA_N"/>
</dbReference>
<dbReference type="InterPro" id="IPR012094">
    <property type="entry name" value="tRNA_Ile_lys_synt"/>
</dbReference>
<dbReference type="InterPro" id="IPR012795">
    <property type="entry name" value="tRNA_Ile_lys_synt_N"/>
</dbReference>
<dbReference type="InterPro" id="IPR015262">
    <property type="entry name" value="tRNA_Ile_lys_synt_subst-bd"/>
</dbReference>
<dbReference type="NCBIfam" id="TIGR02432">
    <property type="entry name" value="lysidine_TilS_N"/>
    <property type="match status" value="1"/>
</dbReference>
<dbReference type="PANTHER" id="PTHR43033">
    <property type="entry name" value="TRNA(ILE)-LYSIDINE SYNTHASE-RELATED"/>
    <property type="match status" value="1"/>
</dbReference>
<dbReference type="PANTHER" id="PTHR43033:SF1">
    <property type="entry name" value="TRNA(ILE)-LYSIDINE SYNTHASE-RELATED"/>
    <property type="match status" value="1"/>
</dbReference>
<dbReference type="Pfam" id="PF01171">
    <property type="entry name" value="ATP_bind_3"/>
    <property type="match status" value="1"/>
</dbReference>
<dbReference type="Pfam" id="PF09179">
    <property type="entry name" value="TilS"/>
    <property type="match status" value="1"/>
</dbReference>
<dbReference type="SUPFAM" id="SSF52402">
    <property type="entry name" value="Adenine nucleotide alpha hydrolases-like"/>
    <property type="match status" value="1"/>
</dbReference>
<dbReference type="SUPFAM" id="SSF82829">
    <property type="entry name" value="MesJ substrate recognition domain-like"/>
    <property type="match status" value="1"/>
</dbReference>
<evidence type="ECO:0000255" key="1">
    <source>
        <dbReference type="HAMAP-Rule" id="MF_01161"/>
    </source>
</evidence>
<evidence type="ECO:0000305" key="2"/>
<name>TILS_SYNP6</name>
<keyword id="KW-0067">ATP-binding</keyword>
<keyword id="KW-0963">Cytoplasm</keyword>
<keyword id="KW-0436">Ligase</keyword>
<keyword id="KW-0547">Nucleotide-binding</keyword>
<keyword id="KW-0819">tRNA processing</keyword>
<sequence length="325" mass="37189">MSSDCWTPFHARLHQLLQRRSLLPTRSRLLLAVSGGQDSLALVQLLRGLQPHWHWSLAIAHCDHGWRSDSTANAEHLRQLADQWQLPFYCQRSPEPPRSEAAARTWRYQVLEAIAADIDAALLVTGHTASDRAETLLYNLTRGSHLQGLASLRWQRSLSDRLTLVRPFLGFTRAETSKMVQQFQLPVWEDSTNRDRRFARNRLRLEVLPQLRQINPQCDRHLANTAELLADEADWLAELTEQVYQQSLSERGLCRSQLAQQPIALQRRVLHAFLQDQLQRSPSTVQVEELRQLITAPQGSCSSSLPQRRVAVVAGDWLRLQSVDD</sequence>
<accession>Q5N517</accession>
<reference key="1">
    <citation type="journal article" date="2007" name="Photosyn. Res.">
        <title>Complete nucleotide sequence of the freshwater unicellular cyanobacterium Synechococcus elongatus PCC 6301 chromosome: gene content and organization.</title>
        <authorList>
            <person name="Sugita C."/>
            <person name="Ogata K."/>
            <person name="Shikata M."/>
            <person name="Jikuya H."/>
            <person name="Takano J."/>
            <person name="Furumichi M."/>
            <person name="Kanehisa M."/>
            <person name="Omata T."/>
            <person name="Sugiura M."/>
            <person name="Sugita M."/>
        </authorList>
    </citation>
    <scope>NUCLEOTIDE SEQUENCE [LARGE SCALE GENOMIC DNA]</scope>
    <source>
        <strain>ATCC 27144 / PCC 6301 / SAUG 1402/1</strain>
    </source>
</reference>
<proteinExistence type="inferred from homology"/>
<protein>
    <recommendedName>
        <fullName evidence="1">tRNA(Ile)-lysidine synthase</fullName>
        <ecNumber evidence="1">6.3.4.19</ecNumber>
    </recommendedName>
    <alternativeName>
        <fullName evidence="1">tRNA(Ile)-2-lysyl-cytidine synthase</fullName>
    </alternativeName>
    <alternativeName>
        <fullName evidence="1">tRNA(Ile)-lysidine synthetase</fullName>
    </alternativeName>
</protein>
<gene>
    <name evidence="1" type="primary">tilS</name>
    <name type="ordered locus">syc0412_c</name>
</gene>